<dbReference type="EC" id="3.4.22.57" evidence="2"/>
<dbReference type="EMBL" id="BT020999">
    <property type="protein sequence ID" value="AAX09016.1"/>
    <property type="molecule type" value="mRNA"/>
</dbReference>
<dbReference type="EMBL" id="BC112708">
    <property type="protein sequence ID" value="AAI12709.1"/>
    <property type="molecule type" value="mRNA"/>
</dbReference>
<dbReference type="RefSeq" id="NP_788811.1">
    <property type="nucleotide sequence ID" value="NM_176638.5"/>
</dbReference>
<dbReference type="SMR" id="Q5E9C1"/>
<dbReference type="FunCoup" id="Q5E9C1">
    <property type="interactions" value="564"/>
</dbReference>
<dbReference type="STRING" id="9913.ENSBTAP00000027820"/>
<dbReference type="MEROPS" id="C14.017"/>
<dbReference type="PaxDb" id="9913-ENSBTAP00000027820"/>
<dbReference type="GeneID" id="338039"/>
<dbReference type="KEGG" id="bta:338039"/>
<dbReference type="CTD" id="837"/>
<dbReference type="VEuPathDB" id="HostDB:ENSBTAG00000020884"/>
<dbReference type="eggNOG" id="KOG3573">
    <property type="taxonomic scope" value="Eukaryota"/>
</dbReference>
<dbReference type="InParanoid" id="Q5E9C1"/>
<dbReference type="OMA" id="ACRGANH"/>
<dbReference type="OrthoDB" id="6097640at2759"/>
<dbReference type="Proteomes" id="UP000009136">
    <property type="component" value="Chromosome 15"/>
</dbReference>
<dbReference type="Bgee" id="ENSBTAG00000020884">
    <property type="expression patterns" value="Expressed in neutrophil and 103 other cell types or tissues"/>
</dbReference>
<dbReference type="GO" id="GO:0061702">
    <property type="term" value="C:canonical inflammasome complex"/>
    <property type="evidence" value="ECO:0007669"/>
    <property type="project" value="UniProtKB-SubCell"/>
</dbReference>
<dbReference type="GO" id="GO:0005789">
    <property type="term" value="C:endoplasmic reticulum membrane"/>
    <property type="evidence" value="ECO:0007669"/>
    <property type="project" value="UniProtKB-SubCell"/>
</dbReference>
<dbReference type="GO" id="GO:0005576">
    <property type="term" value="C:extracellular region"/>
    <property type="evidence" value="ECO:0007669"/>
    <property type="project" value="UniProtKB-SubCell"/>
</dbReference>
<dbReference type="GO" id="GO:0005739">
    <property type="term" value="C:mitochondrion"/>
    <property type="evidence" value="ECO:0007669"/>
    <property type="project" value="UniProtKB-SubCell"/>
</dbReference>
<dbReference type="GO" id="GO:0004197">
    <property type="term" value="F:cysteine-type endopeptidase activity"/>
    <property type="evidence" value="ECO:0000250"/>
    <property type="project" value="UniProtKB"/>
</dbReference>
<dbReference type="GO" id="GO:0008289">
    <property type="term" value="F:lipid binding"/>
    <property type="evidence" value="ECO:0000250"/>
    <property type="project" value="UniProtKB"/>
</dbReference>
<dbReference type="GO" id="GO:0001530">
    <property type="term" value="F:lipopolysaccharide binding"/>
    <property type="evidence" value="ECO:0000250"/>
    <property type="project" value="UniProtKB"/>
</dbReference>
<dbReference type="GO" id="GO:0042742">
    <property type="term" value="P:defense response to bacterium"/>
    <property type="evidence" value="ECO:0000250"/>
    <property type="project" value="UniProtKB"/>
</dbReference>
<dbReference type="GO" id="GO:0050830">
    <property type="term" value="P:defense response to Gram-positive bacterium"/>
    <property type="evidence" value="ECO:0000250"/>
    <property type="project" value="UniProtKB"/>
</dbReference>
<dbReference type="GO" id="GO:0045087">
    <property type="term" value="P:innate immune response"/>
    <property type="evidence" value="ECO:0007669"/>
    <property type="project" value="UniProtKB-KW"/>
</dbReference>
<dbReference type="GO" id="GO:0050729">
    <property type="term" value="P:positive regulation of inflammatory response"/>
    <property type="evidence" value="ECO:0000250"/>
    <property type="project" value="UniProtKB"/>
</dbReference>
<dbReference type="GO" id="GO:2000494">
    <property type="term" value="P:positive regulation of interleukin-18-mediated signaling pathway"/>
    <property type="evidence" value="ECO:0000250"/>
    <property type="project" value="UniProtKB"/>
</dbReference>
<dbReference type="GO" id="GO:0012501">
    <property type="term" value="P:programmed cell death"/>
    <property type="evidence" value="ECO:0007669"/>
    <property type="project" value="UniProtKB-KW"/>
</dbReference>
<dbReference type="GO" id="GO:0016540">
    <property type="term" value="P:protein autoprocessing"/>
    <property type="evidence" value="ECO:0000250"/>
    <property type="project" value="UniProtKB"/>
</dbReference>
<dbReference type="GO" id="GO:0070269">
    <property type="term" value="P:pyroptotic inflammatory response"/>
    <property type="evidence" value="ECO:0000250"/>
    <property type="project" value="UniProtKB"/>
</dbReference>
<dbReference type="GO" id="GO:0042981">
    <property type="term" value="P:regulation of apoptotic process"/>
    <property type="evidence" value="ECO:0007669"/>
    <property type="project" value="InterPro"/>
</dbReference>
<dbReference type="GO" id="GO:0050727">
    <property type="term" value="P:regulation of inflammatory response"/>
    <property type="evidence" value="ECO:0000250"/>
    <property type="project" value="UniProtKB"/>
</dbReference>
<dbReference type="CDD" id="cd08325">
    <property type="entry name" value="CARD_CASP1-like"/>
    <property type="match status" value="1"/>
</dbReference>
<dbReference type="CDD" id="cd00032">
    <property type="entry name" value="CASc"/>
    <property type="match status" value="1"/>
</dbReference>
<dbReference type="FunFam" id="3.40.50.1460:FF:000007">
    <property type="entry name" value="Caspase-1"/>
    <property type="match status" value="1"/>
</dbReference>
<dbReference type="FunFam" id="1.10.533.10:FF:000073">
    <property type="entry name" value="Inactive caspase-12"/>
    <property type="match status" value="1"/>
</dbReference>
<dbReference type="Gene3D" id="3.40.50.1460">
    <property type="match status" value="1"/>
</dbReference>
<dbReference type="Gene3D" id="1.10.533.10">
    <property type="entry name" value="Death Domain, Fas"/>
    <property type="match status" value="1"/>
</dbReference>
<dbReference type="InterPro" id="IPR001315">
    <property type="entry name" value="CARD"/>
</dbReference>
<dbReference type="InterPro" id="IPR029030">
    <property type="entry name" value="Caspase-like_dom_sf"/>
</dbReference>
<dbReference type="InterPro" id="IPR033139">
    <property type="entry name" value="Caspase_cys_AS"/>
</dbReference>
<dbReference type="InterPro" id="IPR016129">
    <property type="entry name" value="Caspase_his_AS"/>
</dbReference>
<dbReference type="InterPro" id="IPR011029">
    <property type="entry name" value="DEATH-like_dom_sf"/>
</dbReference>
<dbReference type="InterPro" id="IPR002398">
    <property type="entry name" value="Pept_C14"/>
</dbReference>
<dbReference type="InterPro" id="IPR011600">
    <property type="entry name" value="Pept_C14_caspase"/>
</dbReference>
<dbReference type="InterPro" id="IPR002138">
    <property type="entry name" value="Pept_C14_p10"/>
</dbReference>
<dbReference type="InterPro" id="IPR001309">
    <property type="entry name" value="Pept_C14_p20"/>
</dbReference>
<dbReference type="InterPro" id="IPR015917">
    <property type="entry name" value="Pept_C14A"/>
</dbReference>
<dbReference type="PANTHER" id="PTHR47901">
    <property type="entry name" value="CASPASE RECRUITMENT DOMAIN-CONTAINING PROTEIN 18"/>
    <property type="match status" value="1"/>
</dbReference>
<dbReference type="PANTHER" id="PTHR47901:SF3">
    <property type="entry name" value="CASPASE-1"/>
    <property type="match status" value="1"/>
</dbReference>
<dbReference type="Pfam" id="PF00619">
    <property type="entry name" value="CARD"/>
    <property type="match status" value="1"/>
</dbReference>
<dbReference type="Pfam" id="PF00656">
    <property type="entry name" value="Peptidase_C14"/>
    <property type="match status" value="1"/>
</dbReference>
<dbReference type="PIRSF" id="PIRSF038001">
    <property type="entry name" value="Caspase_ICE"/>
    <property type="match status" value="1"/>
</dbReference>
<dbReference type="PRINTS" id="PR00376">
    <property type="entry name" value="IL1BCENZYME"/>
</dbReference>
<dbReference type="SMART" id="SM00114">
    <property type="entry name" value="CARD"/>
    <property type="match status" value="1"/>
</dbReference>
<dbReference type="SMART" id="SM00115">
    <property type="entry name" value="CASc"/>
    <property type="match status" value="1"/>
</dbReference>
<dbReference type="SUPFAM" id="SSF52129">
    <property type="entry name" value="Caspase-like"/>
    <property type="match status" value="1"/>
</dbReference>
<dbReference type="SUPFAM" id="SSF47986">
    <property type="entry name" value="DEATH domain"/>
    <property type="match status" value="1"/>
</dbReference>
<dbReference type="PROSITE" id="PS50209">
    <property type="entry name" value="CARD"/>
    <property type="match status" value="1"/>
</dbReference>
<dbReference type="PROSITE" id="PS01122">
    <property type="entry name" value="CASPASE_CYS"/>
    <property type="match status" value="1"/>
</dbReference>
<dbReference type="PROSITE" id="PS01121">
    <property type="entry name" value="CASPASE_HIS"/>
    <property type="match status" value="1"/>
</dbReference>
<dbReference type="PROSITE" id="PS50207">
    <property type="entry name" value="CASPASE_P10"/>
    <property type="match status" value="1"/>
</dbReference>
<dbReference type="PROSITE" id="PS50208">
    <property type="entry name" value="CASPASE_P20"/>
    <property type="match status" value="1"/>
</dbReference>
<proteinExistence type="evidence at transcript level"/>
<evidence type="ECO:0000250" key="1">
    <source>
        <dbReference type="UniProtKB" id="P29466"/>
    </source>
</evidence>
<evidence type="ECO:0000250" key="2">
    <source>
        <dbReference type="UniProtKB" id="P49662"/>
    </source>
</evidence>
<evidence type="ECO:0000250" key="3">
    <source>
        <dbReference type="UniProtKB" id="P70343"/>
    </source>
</evidence>
<evidence type="ECO:0000255" key="4"/>
<evidence type="ECO:0000255" key="5">
    <source>
        <dbReference type="PROSITE-ProRule" id="PRU00046"/>
    </source>
</evidence>
<evidence type="ECO:0000305" key="6"/>
<feature type="propeptide" id="PRO_0000244735" evidence="4">
    <location>
        <begin position="1"/>
        <end position="80" status="uncertain"/>
    </location>
</feature>
<feature type="chain" id="PRO_0000244736" description="Caspase-4 subunit p20" evidence="2">
    <location>
        <begin position="81" status="uncertain"/>
        <end position="270"/>
    </location>
</feature>
<feature type="propeptide" id="PRO_0000244737" evidence="4">
    <location>
        <begin position="271"/>
        <end position="289"/>
    </location>
</feature>
<feature type="chain" id="PRO_0000244738" description="Caspase-4 subunit p10" evidence="2">
    <location>
        <begin position="290"/>
        <end position="377"/>
    </location>
</feature>
<feature type="domain" description="CARD" evidence="5">
    <location>
        <begin position="1"/>
        <end position="91"/>
    </location>
</feature>
<feature type="region of interest" description="Required for LPS-binding" evidence="3">
    <location>
        <begin position="1"/>
        <end position="59"/>
    </location>
</feature>
<feature type="active site" evidence="1">
    <location>
        <position position="210"/>
    </location>
</feature>
<feature type="active site" evidence="2">
    <location>
        <position position="258"/>
    </location>
</feature>
<feature type="site" description="Cleavage; by autolysis" evidence="3">
    <location>
        <begin position="289"/>
        <end position="290"/>
    </location>
</feature>
<feature type="modified residue" description="Phosphoserine" evidence="2">
    <location>
        <position position="83"/>
    </location>
</feature>
<protein>
    <recommendedName>
        <fullName>Caspase-4</fullName>
        <shortName>CASP-4</shortName>
        <ecNumber evidence="2">3.4.22.57</ecNumber>
    </recommendedName>
    <component>
        <recommendedName>
            <fullName evidence="2">Caspase-4 subunit p10</fullName>
        </recommendedName>
    </component>
    <component>
        <recommendedName>
            <fullName evidence="2">Caspase-4 subunit p20</fullName>
        </recommendedName>
    </component>
</protein>
<accession>Q5E9C1</accession>
<organism>
    <name type="scientific">Bos taurus</name>
    <name type="common">Bovine</name>
    <dbReference type="NCBI Taxonomy" id="9913"/>
    <lineage>
        <taxon>Eukaryota</taxon>
        <taxon>Metazoa</taxon>
        <taxon>Chordata</taxon>
        <taxon>Craniata</taxon>
        <taxon>Vertebrata</taxon>
        <taxon>Euteleostomi</taxon>
        <taxon>Mammalia</taxon>
        <taxon>Eutheria</taxon>
        <taxon>Laurasiatheria</taxon>
        <taxon>Artiodactyla</taxon>
        <taxon>Ruminantia</taxon>
        <taxon>Pecora</taxon>
        <taxon>Bovidae</taxon>
        <taxon>Bovinae</taxon>
        <taxon>Bos</taxon>
    </lineage>
</organism>
<name>CASP4_BOVIN</name>
<comment type="function">
    <text evidence="2 3">Inflammatory caspase that acts as the effector of the non-canonical inflammasome by mediating lipopolysaccharide (LPS)-induced pyroptosis. Also indirectly activates the NLRP3 and NLRP6 inflammasomes. Acts as a thiol protease that cleaves a tetrapeptide after an Asp residue at position P1: catalyzes cleavage of CGAS, GSDMD and IL18. Effector of the non-canonical inflammasome independently of NLRP3 inflammasome and CASP1: the non-canonical inflammasome promotes pyroptosis through GSDMD cleavage without involving secretion of cytokine IL1B. In the non-canonical inflammasome, CASP4 is activated by direct binding to the lipid A moiety of LPS without the need of an upstream sensor. LPS-binding promotes CASP4 activation and CASP4-mediated cleavage of GSDMD and IL18, followed by IL18 secretion through the GSDMD pore, pyroptosis of infected cells and their extrusion into the gut lumen. Also indirectly promotes secretion of mature cytokines (IL1A and HMGB1) downstream of GSDMD-mediated pyroptosis via activation of the NLRP3 and NLRP6 inflammasomes. Involved in NLRP3-dependent CASP1 activation and IL1B secretion in response to non-canonical activators, such as UVB radiation or cholera enterotoxin. Involved in NLRP6 inflammasome-dependent activation in response to lipoteichoic acid (LTA), a cell-wall component of Gram-positive bacteria, which leads to CASP1 activation and IL1B secretion. Involved in LPS-induced IL6 secretion; this activity may not require caspase enzymatic activity (By similarity). The non-canonical inflammasome is required for innate immunity to cytosolic, but not vacuolar, bacteria (By similarity). Plays a crucial role in the restriction of S.typhimurium replication in colonic epithelial cells during infection. Pyroptosis limits bacterial replication, while cytokine secretion promotes the recruitment and activation of immune cells and triggers mucosal inflammation (By similarity). May also act as an activator of adaptive immunity in dendritic cells, following activation by oxidized phospholipid 1-palmitoyl-2-arachidonoyl- sn-glycero-3-phosphorylcholine, an oxidized phospholipid (oxPAPC) (By similarity). Cleavage of GSDMD is not strictly dependent on the consensus cleavage site but depends on an exosite interface on CASP4 that recognizes and binds the Gasdermin-D, C-terminal (GSDMD-CT) part. Catalyzes cleavage and maturation of IL18; IL18 processing also depends of the exosite interface on CASP4. In contrast, it does not directly process IL1B. During non-canonical inflammasome activation, cuts CGAS and may play a role in the regulation of antiviral innate immune activation (By similarity).</text>
</comment>
<comment type="catalytic activity">
    <reaction evidence="2">
        <text>Strict requirement for Asp at the P1 position. It has a preferred cleavage sequence of Tyr-Val-Ala-Asp-|- but also cleaves at Asp-Glu-Val-Asp-|-.</text>
        <dbReference type="EC" id="3.4.22.57"/>
    </reaction>
</comment>
<comment type="activity regulation">
    <text evidence="3">Activated by homooligomerization induced by direct binding to cytosolic LPS, in a TLR4-independent manner. In addition to LPS, CASP4/CASP11 may also be activated by oxidized phospholipid 1-palmitoyl-2-arachidonoyl- sn-glycero-3-phosphorylcholine, an oxidized phospholipid (oxPAPC), in dendritic cells, promoting adaptive immunity. The role of oxPAPC is however unclear and another report suggests that oxPAPC competes with LPS-binding and inhibits the non-canonical inflammasome in macrophages.</text>
</comment>
<comment type="subunit">
    <text evidence="2 3">Heterotetramer that consists of two anti-parallel arranged heterodimers, each one formed by a 20 kDa (Caspase-4 subunit p20) and a 10 kDa (Caspase-4 subunit p10) subunit. Upon direct LPS-binding, forms large homooligomers, resulting in its activation. These oligomers are often referred to as 'non-canonical inflammasomes' (By similarity). In its precursor form, interacts with TMEM214; this interaction is required for association with the endoplasmic reticulum membrane. Interacts with CASP1. Interacts with NOD2. Interacts with Serpinb1a, Serpinb1b and Serpinb1c; these interactions regulate CASP4 activity (By similarity).</text>
</comment>
<comment type="subunit">
    <molecule>Caspase-4 subunit p20</molecule>
    <text evidence="3">Heterotetramer that consists of two anti-parallel arranged heterodimers, each one formed by a 20 kDa (Caspase-4 subunit p20) and a 10 kDa (Caspase-4 subunit p10) subunit.</text>
</comment>
<comment type="subunit">
    <molecule>Caspase-4 subunit p10</molecule>
    <text evidence="3">Heterotetramer that consists of two anti-parallel arranged heterodimers, each one formed by a 20 kDa (Caspase-4 subunit p20) and a 10 kDa (Caspase-4 subunit p10) subunit.</text>
</comment>
<comment type="subcellular location">
    <subcellularLocation>
        <location evidence="2">Cytoplasm</location>
        <location evidence="2">Cytosol</location>
    </subcellularLocation>
    <subcellularLocation>
        <location evidence="3">Cytoplasm</location>
    </subcellularLocation>
    <subcellularLocation>
        <location evidence="2">Endoplasmic reticulum membrane</location>
        <topology evidence="2">Peripheral membrane protein</topology>
        <orientation evidence="2">Cytoplasmic side</orientation>
    </subcellularLocation>
    <subcellularLocation>
        <location evidence="2">Mitochondrion</location>
    </subcellularLocation>
    <subcellularLocation>
        <location evidence="3">Inflammasome</location>
    </subcellularLocation>
    <subcellularLocation>
        <location evidence="2">Secreted</location>
    </subcellularLocation>
    <text evidence="2">Predominantly localizes to the endoplasmic reticulum (ER). Association with the ER membrane requires TMEM214. Released in the extracellular milieu by keratinocytes following UVB irradiation.</text>
</comment>
<comment type="domain">
    <text evidence="3">The CARD domain mediates LPS recognition and homooligomerization.</text>
</comment>
<comment type="PTM">
    <text evidence="2">In response to activation signals, undergoes autoproteolytic cleavage and activation.</text>
</comment>
<comment type="similarity">
    <text evidence="6">Belongs to the peptidase C14A family.</text>
</comment>
<gene>
    <name type="primary">CASP4</name>
</gene>
<reference key="1">
    <citation type="journal article" date="2005" name="BMC Genomics">
        <title>Characterization of 954 bovine full-CDS cDNA sequences.</title>
        <authorList>
            <person name="Harhay G.P."/>
            <person name="Sonstegard T.S."/>
            <person name="Keele J.W."/>
            <person name="Heaton M.P."/>
            <person name="Clawson M.L."/>
            <person name="Snelling W.M."/>
            <person name="Wiedmann R.T."/>
            <person name="Van Tassell C.P."/>
            <person name="Smith T.P.L."/>
        </authorList>
    </citation>
    <scope>NUCLEOTIDE SEQUENCE [LARGE SCALE MRNA]</scope>
</reference>
<reference key="2">
    <citation type="submission" date="2006-01" db="EMBL/GenBank/DDBJ databases">
        <authorList>
            <consortium name="NIH - Mammalian Gene Collection (MGC) project"/>
        </authorList>
    </citation>
    <scope>NUCLEOTIDE SEQUENCE [LARGE SCALE MRNA]</scope>
    <source>
        <strain>Hereford</strain>
        <tissue>Hypothalamus</tissue>
    </source>
</reference>
<sequence>MAEDKHNKNPLKMLESLGKELISGLLDDFVEKNVLKLEEEEKKKIYDAKLQDKARVLVDSIRQKNQEAGQVFVQTFLNIDKNSTSIKAPEETVAGPDESVGSAATLKLCPHEEFLKLCKERAGEIYPIKERKDRTRLALIICNTEFDHMPPRNGAALDILGMKQLLEGLGYTVEVEEKLTARDMESVLWKFAAREEHKSSDSTFLVFMSHGILDGICGTMHSEEEPDVLPYDTIFRTFNNRNCLSLKDKPKVIIVQACRGANRGELWVSDSPPALADSFSQSSENLEEDAVYKTHVEKDFIAFCSSTPHNVSWRDIKKGSLFITRLITCFQKYAWCCHLEEVFRKVQQSFEKPNVKAQMPTVERLSMTRYFYLFPGN</sequence>
<keyword id="KW-0963">Cytoplasm</keyword>
<keyword id="KW-0256">Endoplasmic reticulum</keyword>
<keyword id="KW-0378">Hydrolase</keyword>
<keyword id="KW-0391">Immunity</keyword>
<keyword id="KW-1271">Inflammasome</keyword>
<keyword id="KW-0395">Inflammatory response</keyword>
<keyword id="KW-0399">Innate immunity</keyword>
<keyword id="KW-0472">Membrane</keyword>
<keyword id="KW-0496">Mitochondrion</keyword>
<keyword id="KW-1210">Necrosis</keyword>
<keyword id="KW-0597">Phosphoprotein</keyword>
<keyword id="KW-0645">Protease</keyword>
<keyword id="KW-1185">Reference proteome</keyword>
<keyword id="KW-0964">Secreted</keyword>
<keyword id="KW-0788">Thiol protease</keyword>
<keyword id="KW-0865">Zymogen</keyword>